<protein>
    <recommendedName>
        <fullName>Probable amino-acid ABC transporter permease protein YckA</fullName>
    </recommendedName>
</protein>
<sequence length="226" mass="25229">MINSIQWEYIFNTKLAIESFPYVIKGIGYTLLISFVSMFAGTVIGLFISLARMSKLALLRWPAKLYISFMRGVPILVILFILYFGFPYIGIEFSAVTAALIGFSLNSAAYIAEINRSAISSVEKGQWEAASSLGLSYWQTMRGIILPQSIRIALPPLANVLLDLIKASSLAAMITVPELLQHAKIIGGREFDYMTMYILTALIYWAICSIAAVFQNILEKKYAHYV</sequence>
<reference key="1">
    <citation type="journal article" date="1995" name="Microbiology">
        <title>A 10 kb nucleotide sequence at the 5' flanking region (32 degrees) of srfAA of the Bacillus subtilis chromosome.</title>
        <authorList>
            <person name="Fujishima Y."/>
            <person name="Yamane K."/>
        </authorList>
    </citation>
    <scope>NUCLEOTIDE SEQUENCE [GENOMIC DNA]</scope>
    <source>
        <strain>168</strain>
    </source>
</reference>
<reference key="2">
    <citation type="journal article" date="1996" name="Microbiology">
        <title>The 25 degrees-36 degrees region of the Bacillus subtilis chromosome: determination of the sequence of a 146 kb segment and identification of 113 genes.</title>
        <authorList>
            <person name="Yamane K."/>
            <person name="Kumano M."/>
            <person name="Kurita K."/>
        </authorList>
    </citation>
    <scope>NUCLEOTIDE SEQUENCE [GENOMIC DNA]</scope>
    <source>
        <strain>168</strain>
    </source>
</reference>
<reference key="3">
    <citation type="journal article" date="1997" name="Nature">
        <title>The complete genome sequence of the Gram-positive bacterium Bacillus subtilis.</title>
        <authorList>
            <person name="Kunst F."/>
            <person name="Ogasawara N."/>
            <person name="Moszer I."/>
            <person name="Albertini A.M."/>
            <person name="Alloni G."/>
            <person name="Azevedo V."/>
            <person name="Bertero M.G."/>
            <person name="Bessieres P."/>
            <person name="Bolotin A."/>
            <person name="Borchert S."/>
            <person name="Borriss R."/>
            <person name="Boursier L."/>
            <person name="Brans A."/>
            <person name="Braun M."/>
            <person name="Brignell S.C."/>
            <person name="Bron S."/>
            <person name="Brouillet S."/>
            <person name="Bruschi C.V."/>
            <person name="Caldwell B."/>
            <person name="Capuano V."/>
            <person name="Carter N.M."/>
            <person name="Choi S.-K."/>
            <person name="Codani J.-J."/>
            <person name="Connerton I.F."/>
            <person name="Cummings N.J."/>
            <person name="Daniel R.A."/>
            <person name="Denizot F."/>
            <person name="Devine K.M."/>
            <person name="Duesterhoeft A."/>
            <person name="Ehrlich S.D."/>
            <person name="Emmerson P.T."/>
            <person name="Entian K.-D."/>
            <person name="Errington J."/>
            <person name="Fabret C."/>
            <person name="Ferrari E."/>
            <person name="Foulger D."/>
            <person name="Fritz C."/>
            <person name="Fujita M."/>
            <person name="Fujita Y."/>
            <person name="Fuma S."/>
            <person name="Galizzi A."/>
            <person name="Galleron N."/>
            <person name="Ghim S.-Y."/>
            <person name="Glaser P."/>
            <person name="Goffeau A."/>
            <person name="Golightly E.J."/>
            <person name="Grandi G."/>
            <person name="Guiseppi G."/>
            <person name="Guy B.J."/>
            <person name="Haga K."/>
            <person name="Haiech J."/>
            <person name="Harwood C.R."/>
            <person name="Henaut A."/>
            <person name="Hilbert H."/>
            <person name="Holsappel S."/>
            <person name="Hosono S."/>
            <person name="Hullo M.-F."/>
            <person name="Itaya M."/>
            <person name="Jones L.-M."/>
            <person name="Joris B."/>
            <person name="Karamata D."/>
            <person name="Kasahara Y."/>
            <person name="Klaerr-Blanchard M."/>
            <person name="Klein C."/>
            <person name="Kobayashi Y."/>
            <person name="Koetter P."/>
            <person name="Koningstein G."/>
            <person name="Krogh S."/>
            <person name="Kumano M."/>
            <person name="Kurita K."/>
            <person name="Lapidus A."/>
            <person name="Lardinois S."/>
            <person name="Lauber J."/>
            <person name="Lazarevic V."/>
            <person name="Lee S.-M."/>
            <person name="Levine A."/>
            <person name="Liu H."/>
            <person name="Masuda S."/>
            <person name="Mauel C."/>
            <person name="Medigue C."/>
            <person name="Medina N."/>
            <person name="Mellado R.P."/>
            <person name="Mizuno M."/>
            <person name="Moestl D."/>
            <person name="Nakai S."/>
            <person name="Noback M."/>
            <person name="Noone D."/>
            <person name="O'Reilly M."/>
            <person name="Ogawa K."/>
            <person name="Ogiwara A."/>
            <person name="Oudega B."/>
            <person name="Park S.-H."/>
            <person name="Parro V."/>
            <person name="Pohl T.M."/>
            <person name="Portetelle D."/>
            <person name="Porwollik S."/>
            <person name="Prescott A.M."/>
            <person name="Presecan E."/>
            <person name="Pujic P."/>
            <person name="Purnelle B."/>
            <person name="Rapoport G."/>
            <person name="Rey M."/>
            <person name="Reynolds S."/>
            <person name="Rieger M."/>
            <person name="Rivolta C."/>
            <person name="Rocha E."/>
            <person name="Roche B."/>
            <person name="Rose M."/>
            <person name="Sadaie Y."/>
            <person name="Sato T."/>
            <person name="Scanlan E."/>
            <person name="Schleich S."/>
            <person name="Schroeter R."/>
            <person name="Scoffone F."/>
            <person name="Sekiguchi J."/>
            <person name="Sekowska A."/>
            <person name="Seror S.J."/>
            <person name="Serror P."/>
            <person name="Shin B.-S."/>
            <person name="Soldo B."/>
            <person name="Sorokin A."/>
            <person name="Tacconi E."/>
            <person name="Takagi T."/>
            <person name="Takahashi H."/>
            <person name="Takemaru K."/>
            <person name="Takeuchi M."/>
            <person name="Tamakoshi A."/>
            <person name="Tanaka T."/>
            <person name="Terpstra P."/>
            <person name="Tognoni A."/>
            <person name="Tosato V."/>
            <person name="Uchiyama S."/>
            <person name="Vandenbol M."/>
            <person name="Vannier F."/>
            <person name="Vassarotti A."/>
            <person name="Viari A."/>
            <person name="Wambutt R."/>
            <person name="Wedler E."/>
            <person name="Wedler H."/>
            <person name="Weitzenegger T."/>
            <person name="Winters P."/>
            <person name="Wipat A."/>
            <person name="Yamamoto H."/>
            <person name="Yamane K."/>
            <person name="Yasumoto K."/>
            <person name="Yata K."/>
            <person name="Yoshida K."/>
            <person name="Yoshikawa H.-F."/>
            <person name="Zumstein E."/>
            <person name="Yoshikawa H."/>
            <person name="Danchin A."/>
        </authorList>
    </citation>
    <scope>NUCLEOTIDE SEQUENCE [LARGE SCALE GENOMIC DNA]</scope>
    <source>
        <strain>168</strain>
    </source>
</reference>
<gene>
    <name type="primary">yckA</name>
    <name type="ordered locus">BSU03370</name>
</gene>
<accession>P42399</accession>
<proteinExistence type="inferred from homology"/>
<comment type="function">
    <text evidence="1">Part of a binding-protein-dependent transport system. Probably responsible for the translocation of the substrate across the membrane (By similarity).</text>
</comment>
<comment type="subcellular location">
    <subcellularLocation>
        <location evidence="3">Cell membrane</location>
        <topology evidence="2">Multi-pass membrane protein</topology>
    </subcellularLocation>
</comment>
<comment type="similarity">
    <text evidence="3">Belongs to the binding-protein-dependent transport system permease family. HisMQ subfamily.</text>
</comment>
<keyword id="KW-0029">Amino-acid transport</keyword>
<keyword id="KW-1003">Cell membrane</keyword>
<keyword id="KW-0472">Membrane</keyword>
<keyword id="KW-1185">Reference proteome</keyword>
<keyword id="KW-0812">Transmembrane</keyword>
<keyword id="KW-1133">Transmembrane helix</keyword>
<keyword id="KW-0813">Transport</keyword>
<feature type="chain" id="PRO_0000060266" description="Probable amino-acid ABC transporter permease protein YckA">
    <location>
        <begin position="1"/>
        <end position="226"/>
    </location>
</feature>
<feature type="transmembrane region" description="Helical" evidence="2">
    <location>
        <begin position="31"/>
        <end position="51"/>
    </location>
</feature>
<feature type="transmembrane region" description="Helical" evidence="2">
    <location>
        <begin position="73"/>
        <end position="93"/>
    </location>
</feature>
<feature type="transmembrane region" description="Helical" evidence="2">
    <location>
        <begin position="94"/>
        <end position="114"/>
    </location>
</feature>
<feature type="transmembrane region" description="Helical" evidence="2">
    <location>
        <begin position="160"/>
        <end position="180"/>
    </location>
</feature>
<feature type="transmembrane region" description="Helical" evidence="2">
    <location>
        <begin position="194"/>
        <end position="214"/>
    </location>
</feature>
<feature type="domain" description="ABC transmembrane type-1" evidence="2">
    <location>
        <begin position="27"/>
        <end position="215"/>
    </location>
</feature>
<organism>
    <name type="scientific">Bacillus subtilis (strain 168)</name>
    <dbReference type="NCBI Taxonomy" id="224308"/>
    <lineage>
        <taxon>Bacteria</taxon>
        <taxon>Bacillati</taxon>
        <taxon>Bacillota</taxon>
        <taxon>Bacilli</taxon>
        <taxon>Bacillales</taxon>
        <taxon>Bacillaceae</taxon>
        <taxon>Bacillus</taxon>
    </lineage>
</organism>
<dbReference type="EMBL" id="D30762">
    <property type="protein sequence ID" value="BAA06425.1"/>
    <property type="molecule type" value="Genomic_DNA"/>
</dbReference>
<dbReference type="EMBL" id="D50453">
    <property type="protein sequence ID" value="BAA08971.1"/>
    <property type="molecule type" value="Genomic_DNA"/>
</dbReference>
<dbReference type="EMBL" id="AL009126">
    <property type="protein sequence ID" value="CAB12131.1"/>
    <property type="molecule type" value="Genomic_DNA"/>
</dbReference>
<dbReference type="PIR" id="C69760">
    <property type="entry name" value="C69760"/>
</dbReference>
<dbReference type="RefSeq" id="NP_388219.1">
    <property type="nucleotide sequence ID" value="NC_000964.3"/>
</dbReference>
<dbReference type="RefSeq" id="WP_003234624.1">
    <property type="nucleotide sequence ID" value="NZ_OZ025638.1"/>
</dbReference>
<dbReference type="SMR" id="P42399"/>
<dbReference type="FunCoup" id="P42399">
    <property type="interactions" value="254"/>
</dbReference>
<dbReference type="STRING" id="224308.BSU03370"/>
<dbReference type="PaxDb" id="224308-BSU03370"/>
<dbReference type="EnsemblBacteria" id="CAB12131">
    <property type="protein sequence ID" value="CAB12131"/>
    <property type="gene ID" value="BSU_03370"/>
</dbReference>
<dbReference type="GeneID" id="938323"/>
<dbReference type="KEGG" id="bsu:BSU03370"/>
<dbReference type="PATRIC" id="fig|224308.179.peg.352"/>
<dbReference type="eggNOG" id="COG0765">
    <property type="taxonomic scope" value="Bacteria"/>
</dbReference>
<dbReference type="InParanoid" id="P42399"/>
<dbReference type="OrthoDB" id="9805999at2"/>
<dbReference type="PhylomeDB" id="P42399"/>
<dbReference type="BioCyc" id="BSUB:BSU03370-MONOMER"/>
<dbReference type="Proteomes" id="UP000001570">
    <property type="component" value="Chromosome"/>
</dbReference>
<dbReference type="GO" id="GO:0043190">
    <property type="term" value="C:ATP-binding cassette (ABC) transporter complex"/>
    <property type="evidence" value="ECO:0007669"/>
    <property type="project" value="InterPro"/>
</dbReference>
<dbReference type="GO" id="GO:0005886">
    <property type="term" value="C:plasma membrane"/>
    <property type="evidence" value="ECO:0000318"/>
    <property type="project" value="GO_Central"/>
</dbReference>
<dbReference type="GO" id="GO:0022857">
    <property type="term" value="F:transmembrane transporter activity"/>
    <property type="evidence" value="ECO:0007669"/>
    <property type="project" value="InterPro"/>
</dbReference>
<dbReference type="GO" id="GO:0006865">
    <property type="term" value="P:amino acid transport"/>
    <property type="evidence" value="ECO:0000318"/>
    <property type="project" value="GO_Central"/>
</dbReference>
<dbReference type="CDD" id="cd06261">
    <property type="entry name" value="TM_PBP2"/>
    <property type="match status" value="1"/>
</dbReference>
<dbReference type="FunFam" id="1.10.3720.10:FF:000033">
    <property type="entry name" value="Polar amino acid ABC transporter permease"/>
    <property type="match status" value="1"/>
</dbReference>
<dbReference type="Gene3D" id="1.10.3720.10">
    <property type="entry name" value="MetI-like"/>
    <property type="match status" value="1"/>
</dbReference>
<dbReference type="InterPro" id="IPR010065">
    <property type="entry name" value="AA_ABC_transptr_permease_3TM"/>
</dbReference>
<dbReference type="InterPro" id="IPR043429">
    <property type="entry name" value="ArtM/GltK/GlnP/TcyL/YhdX-like"/>
</dbReference>
<dbReference type="InterPro" id="IPR000515">
    <property type="entry name" value="MetI-like"/>
</dbReference>
<dbReference type="InterPro" id="IPR035906">
    <property type="entry name" value="MetI-like_sf"/>
</dbReference>
<dbReference type="NCBIfam" id="TIGR01726">
    <property type="entry name" value="HEQRo_perm_3TM"/>
    <property type="match status" value="1"/>
</dbReference>
<dbReference type="PANTHER" id="PTHR30614:SF0">
    <property type="entry name" value="L-CYSTINE TRANSPORT SYSTEM PERMEASE PROTEIN TCYL"/>
    <property type="match status" value="1"/>
</dbReference>
<dbReference type="PANTHER" id="PTHR30614">
    <property type="entry name" value="MEMBRANE COMPONENT OF AMINO ACID ABC TRANSPORTER"/>
    <property type="match status" value="1"/>
</dbReference>
<dbReference type="Pfam" id="PF00528">
    <property type="entry name" value="BPD_transp_1"/>
    <property type="match status" value="1"/>
</dbReference>
<dbReference type="SUPFAM" id="SSF161098">
    <property type="entry name" value="MetI-like"/>
    <property type="match status" value="1"/>
</dbReference>
<dbReference type="PROSITE" id="PS50928">
    <property type="entry name" value="ABC_TM1"/>
    <property type="match status" value="1"/>
</dbReference>
<name>YCKA_BACSU</name>
<evidence type="ECO:0000250" key="1"/>
<evidence type="ECO:0000255" key="2">
    <source>
        <dbReference type="PROSITE-ProRule" id="PRU00441"/>
    </source>
</evidence>
<evidence type="ECO:0000305" key="3"/>